<dbReference type="EMBL" id="CP000815">
    <property type="protein sequence ID" value="ACB43015.1"/>
    <property type="molecule type" value="Genomic_DNA"/>
</dbReference>
<dbReference type="RefSeq" id="YP_002049225.1">
    <property type="nucleotide sequence ID" value="NC_011087.1"/>
</dbReference>
<dbReference type="SMR" id="B1X4Z6"/>
<dbReference type="GeneID" id="6481799"/>
<dbReference type="GO" id="GO:0070111">
    <property type="term" value="C:organellar chromatophore"/>
    <property type="evidence" value="ECO:0007669"/>
    <property type="project" value="UniProtKB-SubCell"/>
</dbReference>
<dbReference type="GO" id="GO:0009536">
    <property type="term" value="C:plastid"/>
    <property type="evidence" value="ECO:0007669"/>
    <property type="project" value="UniProtKB-KW"/>
</dbReference>
<dbReference type="GO" id="GO:1990904">
    <property type="term" value="C:ribonucleoprotein complex"/>
    <property type="evidence" value="ECO:0007669"/>
    <property type="project" value="UniProtKB-KW"/>
</dbReference>
<dbReference type="GO" id="GO:0005840">
    <property type="term" value="C:ribosome"/>
    <property type="evidence" value="ECO:0007669"/>
    <property type="project" value="UniProtKB-KW"/>
</dbReference>
<dbReference type="GO" id="GO:0019843">
    <property type="term" value="F:rRNA binding"/>
    <property type="evidence" value="ECO:0007669"/>
    <property type="project" value="UniProtKB-KW"/>
</dbReference>
<dbReference type="GO" id="GO:0003735">
    <property type="term" value="F:structural constituent of ribosome"/>
    <property type="evidence" value="ECO:0007669"/>
    <property type="project" value="InterPro"/>
</dbReference>
<dbReference type="GO" id="GO:0006412">
    <property type="term" value="P:translation"/>
    <property type="evidence" value="ECO:0007669"/>
    <property type="project" value="InterPro"/>
</dbReference>
<dbReference type="FunFam" id="3.30.1440.10:FF:000001">
    <property type="entry name" value="50S ribosomal protein L5"/>
    <property type="match status" value="1"/>
</dbReference>
<dbReference type="Gene3D" id="3.30.1440.10">
    <property type="match status" value="1"/>
</dbReference>
<dbReference type="HAMAP" id="MF_01333_B">
    <property type="entry name" value="Ribosomal_uL5_B"/>
    <property type="match status" value="1"/>
</dbReference>
<dbReference type="InterPro" id="IPR002132">
    <property type="entry name" value="Ribosomal_uL5"/>
</dbReference>
<dbReference type="InterPro" id="IPR020930">
    <property type="entry name" value="Ribosomal_uL5_bac-type"/>
</dbReference>
<dbReference type="InterPro" id="IPR031309">
    <property type="entry name" value="Ribosomal_uL5_C"/>
</dbReference>
<dbReference type="InterPro" id="IPR020929">
    <property type="entry name" value="Ribosomal_uL5_CS"/>
</dbReference>
<dbReference type="InterPro" id="IPR022803">
    <property type="entry name" value="Ribosomal_uL5_dom_sf"/>
</dbReference>
<dbReference type="InterPro" id="IPR031310">
    <property type="entry name" value="Ribosomal_uL5_N"/>
</dbReference>
<dbReference type="NCBIfam" id="NF000585">
    <property type="entry name" value="PRK00010.1"/>
    <property type="match status" value="1"/>
</dbReference>
<dbReference type="PANTHER" id="PTHR11994">
    <property type="entry name" value="60S RIBOSOMAL PROTEIN L11-RELATED"/>
    <property type="match status" value="1"/>
</dbReference>
<dbReference type="Pfam" id="PF00281">
    <property type="entry name" value="Ribosomal_L5"/>
    <property type="match status" value="1"/>
</dbReference>
<dbReference type="Pfam" id="PF00673">
    <property type="entry name" value="Ribosomal_L5_C"/>
    <property type="match status" value="1"/>
</dbReference>
<dbReference type="PIRSF" id="PIRSF002161">
    <property type="entry name" value="Ribosomal_L5"/>
    <property type="match status" value="1"/>
</dbReference>
<dbReference type="SUPFAM" id="SSF55282">
    <property type="entry name" value="RL5-like"/>
    <property type="match status" value="1"/>
</dbReference>
<dbReference type="PROSITE" id="PS00358">
    <property type="entry name" value="RIBOSOMAL_L5"/>
    <property type="match status" value="1"/>
</dbReference>
<sequence>MSLKQRYRETIQGKLLTELSFSNIHEVPKVTKITVNRGLGEAAQNAKFLEASITELSNITGQKVLVTRAKKAIAGFKIRQGMPIGVAVTLRGDRMYSFLERLINLALPRIRDFRGVSPKSFDGRGNYTLGVKEQIIFPEISYDKIDAIRGMDITIVTNARNDEEGRALLREMGMPFRSN</sequence>
<protein>
    <recommendedName>
        <fullName evidence="2">Large ribosomal subunit protein uL5c</fullName>
    </recommendedName>
    <alternativeName>
        <fullName>50S ribosomal protein L5, organellar chromatophore</fullName>
    </alternativeName>
</protein>
<gene>
    <name type="primary">rpl5</name>
    <name type="ordered locus">PCC_0585</name>
</gene>
<feature type="chain" id="PRO_0000365650" description="Large ribosomal subunit protein uL5c">
    <location>
        <begin position="1"/>
        <end position="179"/>
    </location>
</feature>
<comment type="function">
    <text evidence="1">Binds 5S rRNA, forms part of the central protuberance of the 50S subunit.</text>
</comment>
<comment type="subunit">
    <text evidence="1">Part of the 50S ribosomal subunit; contacts the 5S rRNA.</text>
</comment>
<comment type="subcellular location">
    <subcellularLocation>
        <location>Plastid</location>
        <location>Organellar chromatophore</location>
    </subcellularLocation>
</comment>
<comment type="similarity">
    <text evidence="2">Belongs to the universal ribosomal protein uL5 family.</text>
</comment>
<evidence type="ECO:0000250" key="1"/>
<evidence type="ECO:0000305" key="2"/>
<name>RK5_PAUCH</name>
<keyword id="KW-0994">Organellar chromatophore</keyword>
<keyword id="KW-0934">Plastid</keyword>
<keyword id="KW-0687">Ribonucleoprotein</keyword>
<keyword id="KW-0689">Ribosomal protein</keyword>
<keyword id="KW-0694">RNA-binding</keyword>
<keyword id="KW-0699">rRNA-binding</keyword>
<reference key="1">
    <citation type="journal article" date="2008" name="Curr. Biol.">
        <title>Chromatophore genome sequence of Paulinella sheds light on acquisition of photosynthesis by eukaryotes.</title>
        <authorList>
            <person name="Nowack E.C.M."/>
            <person name="Melkonian M."/>
            <person name="Gloeckner G."/>
        </authorList>
    </citation>
    <scope>NUCLEOTIDE SEQUENCE [LARGE SCALE GENOMIC DNA]</scope>
</reference>
<organism>
    <name type="scientific">Paulinella chromatophora</name>
    <dbReference type="NCBI Taxonomy" id="39717"/>
    <lineage>
        <taxon>Eukaryota</taxon>
        <taxon>Sar</taxon>
        <taxon>Rhizaria</taxon>
        <taxon>Cercozoa</taxon>
        <taxon>Imbricatea</taxon>
        <taxon>Silicofilosea</taxon>
        <taxon>Euglyphida</taxon>
        <taxon>Paulinellidae</taxon>
        <taxon>Paulinella</taxon>
    </lineage>
</organism>
<accession>B1X4Z6</accession>
<geneLocation type="organellar chromatophore"/>
<proteinExistence type="inferred from homology"/>